<sequence>MTDKTSLSYKDAGVDIDAGNALVERIKGVSKRTRRPEVLGGLGGFGALCQIPAGYKEPVLVSGTDGVGTKLRLAIDLKKHDTVGIDLVAMCVNDLIVQGAEPLFFLDYYATGKLDVDTAAAVVTGIGAGCEQSGCALVGGETAEMPGMYEGEDYDIAGFCVGVVEKSEIIDGSKVGEGDALIALAASGPHSNGFSLVRKILEVSKADVQQPLGDTTLANALLEPTRIYVKPVLKLIKECEIHALSHITGGGFWENIPRVLPANTQAVIDEQSWQWPAVFSWLQQAGNVTRHEMYRTFNCGVGMIIALPADQLEKALTLLKTEGENAWHIGYITKAADGEEQVIIQ</sequence>
<accession>A0KM24</accession>
<reference key="1">
    <citation type="journal article" date="2006" name="J. Bacteriol.">
        <title>Genome sequence of Aeromonas hydrophila ATCC 7966T: jack of all trades.</title>
        <authorList>
            <person name="Seshadri R."/>
            <person name="Joseph S.W."/>
            <person name="Chopra A.K."/>
            <person name="Sha J."/>
            <person name="Shaw J."/>
            <person name="Graf J."/>
            <person name="Haft D.H."/>
            <person name="Wu M."/>
            <person name="Ren Q."/>
            <person name="Rosovitz M.J."/>
            <person name="Madupu R."/>
            <person name="Tallon L."/>
            <person name="Kim M."/>
            <person name="Jin S."/>
            <person name="Vuong H."/>
            <person name="Stine O.C."/>
            <person name="Ali A."/>
            <person name="Horneman A.J."/>
            <person name="Heidelberg J.F."/>
        </authorList>
    </citation>
    <scope>NUCLEOTIDE SEQUENCE [LARGE SCALE GENOMIC DNA]</scope>
    <source>
        <strain>ATCC 7966 / DSM 30187 / BCRC 13018 / CCUG 14551 / JCM 1027 / KCTC 2358 / NCIMB 9240 / NCTC 8049</strain>
    </source>
</reference>
<gene>
    <name evidence="1" type="primary">purM</name>
    <name type="ordered locus">AHA_2821</name>
</gene>
<dbReference type="EC" id="6.3.3.1" evidence="1"/>
<dbReference type="EMBL" id="CP000462">
    <property type="protein sequence ID" value="ABK37366.1"/>
    <property type="molecule type" value="Genomic_DNA"/>
</dbReference>
<dbReference type="RefSeq" id="WP_011706623.1">
    <property type="nucleotide sequence ID" value="NC_008570.1"/>
</dbReference>
<dbReference type="RefSeq" id="YP_857325.1">
    <property type="nucleotide sequence ID" value="NC_008570.1"/>
</dbReference>
<dbReference type="SMR" id="A0KM24"/>
<dbReference type="STRING" id="380703.AHA_2821"/>
<dbReference type="EnsemblBacteria" id="ABK37366">
    <property type="protein sequence ID" value="ABK37366"/>
    <property type="gene ID" value="AHA_2821"/>
</dbReference>
<dbReference type="GeneID" id="4488746"/>
<dbReference type="KEGG" id="aha:AHA_2821"/>
<dbReference type="PATRIC" id="fig|380703.7.peg.2831"/>
<dbReference type="eggNOG" id="COG0150">
    <property type="taxonomic scope" value="Bacteria"/>
</dbReference>
<dbReference type="HOGENOM" id="CLU_047116_0_0_6"/>
<dbReference type="OrthoDB" id="9777881at2"/>
<dbReference type="UniPathway" id="UPA00074">
    <property type="reaction ID" value="UER00129"/>
</dbReference>
<dbReference type="Proteomes" id="UP000000756">
    <property type="component" value="Chromosome"/>
</dbReference>
<dbReference type="GO" id="GO:0005829">
    <property type="term" value="C:cytosol"/>
    <property type="evidence" value="ECO:0007669"/>
    <property type="project" value="TreeGrafter"/>
</dbReference>
<dbReference type="GO" id="GO:0005524">
    <property type="term" value="F:ATP binding"/>
    <property type="evidence" value="ECO:0007669"/>
    <property type="project" value="UniProtKB-KW"/>
</dbReference>
<dbReference type="GO" id="GO:0004637">
    <property type="term" value="F:phosphoribosylamine-glycine ligase activity"/>
    <property type="evidence" value="ECO:0007669"/>
    <property type="project" value="TreeGrafter"/>
</dbReference>
<dbReference type="GO" id="GO:0004641">
    <property type="term" value="F:phosphoribosylformylglycinamidine cyclo-ligase activity"/>
    <property type="evidence" value="ECO:0007669"/>
    <property type="project" value="UniProtKB-UniRule"/>
</dbReference>
<dbReference type="GO" id="GO:0006189">
    <property type="term" value="P:'de novo' IMP biosynthetic process"/>
    <property type="evidence" value="ECO:0007669"/>
    <property type="project" value="UniProtKB-UniRule"/>
</dbReference>
<dbReference type="GO" id="GO:0046084">
    <property type="term" value="P:adenine biosynthetic process"/>
    <property type="evidence" value="ECO:0007669"/>
    <property type="project" value="TreeGrafter"/>
</dbReference>
<dbReference type="CDD" id="cd02196">
    <property type="entry name" value="PurM"/>
    <property type="match status" value="1"/>
</dbReference>
<dbReference type="FunFam" id="3.30.1330.10:FF:000001">
    <property type="entry name" value="Phosphoribosylformylglycinamidine cyclo-ligase"/>
    <property type="match status" value="1"/>
</dbReference>
<dbReference type="FunFam" id="3.90.650.10:FF:000001">
    <property type="entry name" value="Phosphoribosylformylglycinamidine cyclo-ligase"/>
    <property type="match status" value="1"/>
</dbReference>
<dbReference type="Gene3D" id="3.90.650.10">
    <property type="entry name" value="PurM-like C-terminal domain"/>
    <property type="match status" value="1"/>
</dbReference>
<dbReference type="Gene3D" id="3.30.1330.10">
    <property type="entry name" value="PurM-like, N-terminal domain"/>
    <property type="match status" value="1"/>
</dbReference>
<dbReference type="HAMAP" id="MF_00741">
    <property type="entry name" value="AIRS"/>
    <property type="match status" value="1"/>
</dbReference>
<dbReference type="InterPro" id="IPR010918">
    <property type="entry name" value="PurM-like_C_dom"/>
</dbReference>
<dbReference type="InterPro" id="IPR036676">
    <property type="entry name" value="PurM-like_C_sf"/>
</dbReference>
<dbReference type="InterPro" id="IPR016188">
    <property type="entry name" value="PurM-like_N"/>
</dbReference>
<dbReference type="InterPro" id="IPR036921">
    <property type="entry name" value="PurM-like_N_sf"/>
</dbReference>
<dbReference type="InterPro" id="IPR004733">
    <property type="entry name" value="PurM_cligase"/>
</dbReference>
<dbReference type="NCBIfam" id="TIGR00878">
    <property type="entry name" value="purM"/>
    <property type="match status" value="1"/>
</dbReference>
<dbReference type="PANTHER" id="PTHR10520:SF12">
    <property type="entry name" value="TRIFUNCTIONAL PURINE BIOSYNTHETIC PROTEIN ADENOSINE-3"/>
    <property type="match status" value="1"/>
</dbReference>
<dbReference type="PANTHER" id="PTHR10520">
    <property type="entry name" value="TRIFUNCTIONAL PURINE BIOSYNTHETIC PROTEIN ADENOSINE-3-RELATED"/>
    <property type="match status" value="1"/>
</dbReference>
<dbReference type="Pfam" id="PF00586">
    <property type="entry name" value="AIRS"/>
    <property type="match status" value="1"/>
</dbReference>
<dbReference type="Pfam" id="PF02769">
    <property type="entry name" value="AIRS_C"/>
    <property type="match status" value="1"/>
</dbReference>
<dbReference type="SUPFAM" id="SSF56042">
    <property type="entry name" value="PurM C-terminal domain-like"/>
    <property type="match status" value="1"/>
</dbReference>
<dbReference type="SUPFAM" id="SSF55326">
    <property type="entry name" value="PurM N-terminal domain-like"/>
    <property type="match status" value="1"/>
</dbReference>
<feature type="chain" id="PRO_1000046417" description="Phosphoribosylformylglycinamidine cyclo-ligase">
    <location>
        <begin position="1"/>
        <end position="345"/>
    </location>
</feature>
<comment type="catalytic activity">
    <reaction evidence="1">
        <text>2-formamido-N(1)-(5-O-phospho-beta-D-ribosyl)acetamidine + ATP = 5-amino-1-(5-phospho-beta-D-ribosyl)imidazole + ADP + phosphate + H(+)</text>
        <dbReference type="Rhea" id="RHEA:23032"/>
        <dbReference type="ChEBI" id="CHEBI:15378"/>
        <dbReference type="ChEBI" id="CHEBI:30616"/>
        <dbReference type="ChEBI" id="CHEBI:43474"/>
        <dbReference type="ChEBI" id="CHEBI:137981"/>
        <dbReference type="ChEBI" id="CHEBI:147287"/>
        <dbReference type="ChEBI" id="CHEBI:456216"/>
        <dbReference type="EC" id="6.3.3.1"/>
    </reaction>
</comment>
<comment type="pathway">
    <text evidence="1">Purine metabolism; IMP biosynthesis via de novo pathway; 5-amino-1-(5-phospho-D-ribosyl)imidazole from N(2)-formyl-N(1)-(5-phospho-D-ribosyl)glycinamide: step 2/2.</text>
</comment>
<comment type="subcellular location">
    <subcellularLocation>
        <location evidence="1">Cytoplasm</location>
    </subcellularLocation>
</comment>
<comment type="similarity">
    <text evidence="1">Belongs to the AIR synthase family.</text>
</comment>
<name>PUR5_AERHH</name>
<protein>
    <recommendedName>
        <fullName evidence="1">Phosphoribosylformylglycinamidine cyclo-ligase</fullName>
        <ecNumber evidence="1">6.3.3.1</ecNumber>
    </recommendedName>
    <alternativeName>
        <fullName evidence="1">AIR synthase</fullName>
    </alternativeName>
    <alternativeName>
        <fullName evidence="1">AIRS</fullName>
    </alternativeName>
    <alternativeName>
        <fullName evidence="1">Phosphoribosyl-aminoimidazole synthetase</fullName>
    </alternativeName>
</protein>
<evidence type="ECO:0000255" key="1">
    <source>
        <dbReference type="HAMAP-Rule" id="MF_00741"/>
    </source>
</evidence>
<proteinExistence type="inferred from homology"/>
<keyword id="KW-0067">ATP-binding</keyword>
<keyword id="KW-0963">Cytoplasm</keyword>
<keyword id="KW-0436">Ligase</keyword>
<keyword id="KW-0547">Nucleotide-binding</keyword>
<keyword id="KW-0658">Purine biosynthesis</keyword>
<keyword id="KW-1185">Reference proteome</keyword>
<organism>
    <name type="scientific">Aeromonas hydrophila subsp. hydrophila (strain ATCC 7966 / DSM 30187 / BCRC 13018 / CCUG 14551 / JCM 1027 / KCTC 2358 / NCIMB 9240 / NCTC 8049)</name>
    <dbReference type="NCBI Taxonomy" id="380703"/>
    <lineage>
        <taxon>Bacteria</taxon>
        <taxon>Pseudomonadati</taxon>
        <taxon>Pseudomonadota</taxon>
        <taxon>Gammaproteobacteria</taxon>
        <taxon>Aeromonadales</taxon>
        <taxon>Aeromonadaceae</taxon>
        <taxon>Aeromonas</taxon>
    </lineage>
</organism>